<feature type="chain" id="PRO_0000304715" description="Mediator of RNA polymerase II transcription subunit 17">
    <location>
        <begin position="1"/>
        <end position="691"/>
    </location>
</feature>
<feature type="coiled-coil region" evidence="2">
    <location>
        <begin position="158"/>
        <end position="185"/>
    </location>
</feature>
<protein>
    <recommendedName>
        <fullName>Mediator of RNA polymerase II transcription subunit 17</fullName>
    </recommendedName>
    <alternativeName>
        <fullName>Mediator complex subunit 17</fullName>
    </alternativeName>
</protein>
<proteinExistence type="inferred from homology"/>
<reference key="1">
    <citation type="journal article" date="2009" name="Genome Res.">
        <title>Comparative genomic analyses of the human fungal pathogens Coccidioides and their relatives.</title>
        <authorList>
            <person name="Sharpton T.J."/>
            <person name="Stajich J.E."/>
            <person name="Rounsley S.D."/>
            <person name="Gardner M.J."/>
            <person name="Wortman J.R."/>
            <person name="Jordar V.S."/>
            <person name="Maiti R."/>
            <person name="Kodira C.D."/>
            <person name="Neafsey D.E."/>
            <person name="Zeng Q."/>
            <person name="Hung C.-Y."/>
            <person name="McMahan C."/>
            <person name="Muszewska A."/>
            <person name="Grynberg M."/>
            <person name="Mandel M.A."/>
            <person name="Kellner E.M."/>
            <person name="Barker B.M."/>
            <person name="Galgiani J.N."/>
            <person name="Orbach M.J."/>
            <person name="Kirkland T.N."/>
            <person name="Cole G.T."/>
            <person name="Henn M.R."/>
            <person name="Birren B.W."/>
            <person name="Taylor J.W."/>
        </authorList>
    </citation>
    <scope>NUCLEOTIDE SEQUENCE [LARGE SCALE GENOMIC DNA]</scope>
    <source>
        <strain>RS</strain>
    </source>
</reference>
<reference key="2">
    <citation type="journal article" date="2010" name="Genome Res.">
        <title>Population genomic sequencing of Coccidioides fungi reveals recent hybridization and transposon control.</title>
        <authorList>
            <person name="Neafsey D.E."/>
            <person name="Barker B.M."/>
            <person name="Sharpton T.J."/>
            <person name="Stajich J.E."/>
            <person name="Park D.J."/>
            <person name="Whiston E."/>
            <person name="Hung C.-Y."/>
            <person name="McMahan C."/>
            <person name="White J."/>
            <person name="Sykes S."/>
            <person name="Heiman D."/>
            <person name="Young S."/>
            <person name="Zeng Q."/>
            <person name="Abouelleil A."/>
            <person name="Aftuck L."/>
            <person name="Bessette D."/>
            <person name="Brown A."/>
            <person name="FitzGerald M."/>
            <person name="Lui A."/>
            <person name="Macdonald J.P."/>
            <person name="Priest M."/>
            <person name="Orbach M.J."/>
            <person name="Galgiani J.N."/>
            <person name="Kirkland T.N."/>
            <person name="Cole G.T."/>
            <person name="Birren B.W."/>
            <person name="Henn M.R."/>
            <person name="Taylor J.W."/>
            <person name="Rounsley S.D."/>
        </authorList>
    </citation>
    <scope>GENOME REANNOTATION</scope>
    <source>
        <strain>RS</strain>
    </source>
</reference>
<dbReference type="EMBL" id="GG704913">
    <property type="protein sequence ID" value="EAS30135.3"/>
    <property type="molecule type" value="Genomic_DNA"/>
</dbReference>
<dbReference type="RefSeq" id="XP_001241718.1">
    <property type="nucleotide sequence ID" value="XM_001241717.2"/>
</dbReference>
<dbReference type="STRING" id="246410.Q1DLD2"/>
<dbReference type="GeneID" id="4560685"/>
<dbReference type="KEGG" id="cim:CIMG_08881"/>
<dbReference type="VEuPathDB" id="FungiDB:CIMG_08881"/>
<dbReference type="InParanoid" id="Q1DLD2"/>
<dbReference type="OMA" id="AAETKYW"/>
<dbReference type="OrthoDB" id="5319830at2759"/>
<dbReference type="Proteomes" id="UP000001261">
    <property type="component" value="Unassembled WGS sequence"/>
</dbReference>
<dbReference type="GO" id="GO:0070847">
    <property type="term" value="C:core mediator complex"/>
    <property type="evidence" value="ECO:0007669"/>
    <property type="project" value="TreeGrafter"/>
</dbReference>
<dbReference type="GO" id="GO:0016592">
    <property type="term" value="C:mediator complex"/>
    <property type="evidence" value="ECO:0007669"/>
    <property type="project" value="InterPro"/>
</dbReference>
<dbReference type="GO" id="GO:0003712">
    <property type="term" value="F:transcription coregulator activity"/>
    <property type="evidence" value="ECO:0007669"/>
    <property type="project" value="InterPro"/>
</dbReference>
<dbReference type="GO" id="GO:0006357">
    <property type="term" value="P:regulation of transcription by RNA polymerase II"/>
    <property type="evidence" value="ECO:0007669"/>
    <property type="project" value="InterPro"/>
</dbReference>
<dbReference type="Gene3D" id="6.10.250.2620">
    <property type="match status" value="1"/>
</dbReference>
<dbReference type="InterPro" id="IPR019313">
    <property type="entry name" value="Mediator_Med17"/>
</dbReference>
<dbReference type="PANTHER" id="PTHR13114">
    <property type="entry name" value="MEDIATOR OF RNA POLYMERASE II TRANSCRIPTION SUBUNIT 17"/>
    <property type="match status" value="1"/>
</dbReference>
<dbReference type="PANTHER" id="PTHR13114:SF7">
    <property type="entry name" value="MEDIATOR OF RNA POLYMERASE II TRANSCRIPTION SUBUNIT 17"/>
    <property type="match status" value="1"/>
</dbReference>
<dbReference type="Pfam" id="PF10156">
    <property type="entry name" value="Med17"/>
    <property type="match status" value="1"/>
</dbReference>
<sequence>MSNSFTLPLRPARQKANREDDLAVKIAQINAQKGSFRDVTEASLLAEIEAARAVGDGEAEAVDVKTGEDEEENREEKLFKSRLEISQFAMNAHMEATYALEFVSLLLSKHAPRQAETSMSPLLKQKVPLGSLGADHIKPPEQSETQKRDVDAVSRGWKLESFDAAANKLLQSAQRLEEDIAAETKYWSEVLKIKEKGWKVCRLPQERQTLGVHFGFLESTQNFRDRGLAALRKGEAGRLILDRGIQLKPPRFVRVRVQRGDQTLGLTIPAISKQLDDQCLDGRIREARDSLYEEELFYELNREARVLLQYGVEIRRDLLKFPADDNKHIFVDLVGLDEALPDIGGLDPLDNLLAEGVAKSFRILLSYAHRKNHHRRTRVPPPVTPNKRPAPEYNIIRPLLCYFQHRSHYQWFTSFFGTLSKTLRSAGLKCSYTLYPLMKRPQSRAGSSQQTLTVSSVERLIDTLINPSESIISCNLISQGSVFRVRITTNVNPNGLGSEFELVTNLAHFPAQQSPFRFGLREDVRDLIIHLFTLDLVYLVPSLVKGSASAGASQYLISRYTGSQAFVEEESTDENEFAPSPAAKQDDVYLLPWQPTFPQQGELTAYSPARCRTKKLQIQLQSDQLQLRCFWVRHRGPSTKADEQPGERLFTWRAVDMLGGAEESSRPTLQRVMELLGEKYDDQTVQNIGSK</sequence>
<organism>
    <name type="scientific">Coccidioides immitis (strain RS)</name>
    <name type="common">Valley fever fungus</name>
    <dbReference type="NCBI Taxonomy" id="246410"/>
    <lineage>
        <taxon>Eukaryota</taxon>
        <taxon>Fungi</taxon>
        <taxon>Dikarya</taxon>
        <taxon>Ascomycota</taxon>
        <taxon>Pezizomycotina</taxon>
        <taxon>Eurotiomycetes</taxon>
        <taxon>Eurotiomycetidae</taxon>
        <taxon>Onygenales</taxon>
        <taxon>Onygenaceae</taxon>
        <taxon>Coccidioides</taxon>
    </lineage>
</organism>
<gene>
    <name type="primary">SRB4</name>
    <name type="synonym">MED17</name>
    <name type="ORF">CIMG_08881</name>
</gene>
<name>MED17_COCIM</name>
<keyword id="KW-0010">Activator</keyword>
<keyword id="KW-0175">Coiled coil</keyword>
<keyword id="KW-0539">Nucleus</keyword>
<keyword id="KW-1185">Reference proteome</keyword>
<keyword id="KW-0804">Transcription</keyword>
<keyword id="KW-0805">Transcription regulation</keyword>
<accession>Q1DLD2</accession>
<accession>J3K1S5</accession>
<comment type="function">
    <text evidence="1">Component of the Mediator complex, a coactivator involved in the regulated transcription of nearly all RNA polymerase II-dependent genes. Mediator functions as a bridge to convey information from gene-specific regulatory proteins to the basal RNA polymerase II transcription machinery. Mediator is recruited to promoters by direct interactions with regulatory proteins and serves as a scaffold for the assembly of a functional preinitiation complex with RNA polymerase II and the general transcription factors (By similarity).</text>
</comment>
<comment type="subunit">
    <text evidence="1">Component of the Mediator complex.</text>
</comment>
<comment type="subcellular location">
    <subcellularLocation>
        <location evidence="1">Nucleus</location>
    </subcellularLocation>
</comment>
<comment type="similarity">
    <text evidence="3">Belongs to the Mediator complex subunit 17 family.</text>
</comment>
<evidence type="ECO:0000250" key="1"/>
<evidence type="ECO:0000255" key="2"/>
<evidence type="ECO:0000305" key="3"/>